<accession>A4XSC0</accession>
<protein>
    <recommendedName>
        <fullName>Probable periplasmic serine endoprotease DegP-like</fullName>
        <ecNumber>3.4.21.107</ecNumber>
    </recommendedName>
    <alternativeName>
        <fullName>Protease Do</fullName>
    </alternativeName>
</protein>
<keyword id="KW-0378">Hydrolase</keyword>
<keyword id="KW-0574">Periplasm</keyword>
<keyword id="KW-0645">Protease</keyword>
<keyword id="KW-0677">Repeat</keyword>
<keyword id="KW-0720">Serine protease</keyword>
<keyword id="KW-0732">Signal</keyword>
<keyword id="KW-0346">Stress response</keyword>
<evidence type="ECO:0000250" key="1"/>
<evidence type="ECO:0000255" key="2"/>
<evidence type="ECO:0000255" key="3">
    <source>
        <dbReference type="PROSITE-ProRule" id="PRU00143"/>
    </source>
</evidence>
<evidence type="ECO:0000305" key="4"/>
<name>DEGPL_ECTM1</name>
<sequence length="474" mass="50212">MRNLKSVTPLLMAALLWGQSLLAQASLPDFTALVEEASPAVVNISTRQKMPERSVAAQPGLPDLEGLPPMFREFFERSIPQMPRNPGGRQREAQSLGSGFIISADGYVLTNNHVVADADEIIVRLSDRSELEAKLIGADPRSDVALLKVEGKGLPTVRLGKSDELKVGEWVLAIGSPFGFDHSVTAGIVSAKGRNLPSDSYVPFIQTDVAINPGNSGGPLFNLKGEVVGINSQIFTRSGGFMGLSFAIPMEVALQVSEQLKADGKVTRGWLGVVIQEVNKDLAESFGLDRPAGALVAQVLEDGPADKGGLQVGDVILSLNGKPIVMSADLPHLVGGLKPGEKAEMDVVRDGSRKKLKVTIGTLPEEGQELAAAGSTKGGERSSNRLGVTVVELTAEQKKGLDLRGGVVVKEVLSGPAAMIGLRPGDVITHLNNQAIDSTATFAKVAQELPKNRSVSMRVLRQGRASFITFKLAE</sequence>
<proteinExistence type="inferred from homology"/>
<organism>
    <name type="scientific">Ectopseudomonas mendocina (strain ymp)</name>
    <name type="common">Pseudomonas mendocina</name>
    <dbReference type="NCBI Taxonomy" id="399739"/>
    <lineage>
        <taxon>Bacteria</taxon>
        <taxon>Pseudomonadati</taxon>
        <taxon>Pseudomonadota</taxon>
        <taxon>Gammaproteobacteria</taxon>
        <taxon>Pseudomonadales</taxon>
        <taxon>Pseudomonadaceae</taxon>
        <taxon>Ectopseudomonas</taxon>
    </lineage>
</organism>
<gene>
    <name type="ordered locus">Pmen_1471</name>
</gene>
<comment type="function">
    <text evidence="1">Might be efficient in the degradation of transiently denatured and unfolded proteins which accumulate in the periplasm following stress conditions.</text>
</comment>
<comment type="catalytic activity">
    <reaction>
        <text>Acts on substrates that are at least partially unfolded. The cleavage site P1 residue is normally between a pair of hydrophobic residues, such as Val-|-Val.</text>
        <dbReference type="EC" id="3.4.21.107"/>
    </reaction>
</comment>
<comment type="subcellular location">
    <subcellularLocation>
        <location evidence="4">Periplasm</location>
    </subcellularLocation>
</comment>
<comment type="similarity">
    <text evidence="4">Belongs to the peptidase S1C family.</text>
</comment>
<feature type="signal peptide" evidence="2">
    <location>
        <begin position="1"/>
        <end position="25"/>
    </location>
</feature>
<feature type="chain" id="PRO_5000240365" description="Probable periplasmic serine endoprotease DegP-like">
    <location>
        <begin position="26"/>
        <end position="474"/>
    </location>
</feature>
<feature type="domain" description="PDZ 1" evidence="3">
    <location>
        <begin position="260"/>
        <end position="351"/>
    </location>
</feature>
<feature type="domain" description="PDZ 2" evidence="3">
    <location>
        <begin position="357"/>
        <end position="463"/>
    </location>
</feature>
<feature type="active site" description="Charge relay system" evidence="1">
    <location>
        <position position="113"/>
    </location>
</feature>
<feature type="active site" description="Charge relay system" evidence="2">
    <location>
        <position position="143"/>
    </location>
</feature>
<feature type="active site" description="Charge relay system" evidence="1">
    <location>
        <position position="216"/>
    </location>
</feature>
<feature type="binding site" evidence="1">
    <location>
        <begin position="214"/>
        <end position="216"/>
    </location>
    <ligand>
        <name>substrate</name>
    </ligand>
</feature>
<feature type="binding site" evidence="1">
    <location>
        <begin position="271"/>
        <end position="275"/>
    </location>
    <ligand>
        <name>substrate</name>
    </ligand>
</feature>
<dbReference type="EC" id="3.4.21.107"/>
<dbReference type="EMBL" id="CP000680">
    <property type="protein sequence ID" value="ABP84236.1"/>
    <property type="molecule type" value="Genomic_DNA"/>
</dbReference>
<dbReference type="SMR" id="A4XSC0"/>
<dbReference type="STRING" id="399739.Pmen_1471"/>
<dbReference type="KEGG" id="pmy:Pmen_1471"/>
<dbReference type="PATRIC" id="fig|399739.8.peg.1493"/>
<dbReference type="eggNOG" id="COG0265">
    <property type="taxonomic scope" value="Bacteria"/>
</dbReference>
<dbReference type="HOGENOM" id="CLU_020120_1_0_6"/>
<dbReference type="OrthoDB" id="9758917at2"/>
<dbReference type="GO" id="GO:0042597">
    <property type="term" value="C:periplasmic space"/>
    <property type="evidence" value="ECO:0007669"/>
    <property type="project" value="UniProtKB-SubCell"/>
</dbReference>
<dbReference type="GO" id="GO:0004252">
    <property type="term" value="F:serine-type endopeptidase activity"/>
    <property type="evidence" value="ECO:0007669"/>
    <property type="project" value="InterPro"/>
</dbReference>
<dbReference type="GO" id="GO:0006508">
    <property type="term" value="P:proteolysis"/>
    <property type="evidence" value="ECO:0007669"/>
    <property type="project" value="UniProtKB-KW"/>
</dbReference>
<dbReference type="CDD" id="cd10839">
    <property type="entry name" value="cpPDZ1_DegP-like"/>
    <property type="match status" value="1"/>
</dbReference>
<dbReference type="FunFam" id="2.30.42.10:FF:000037">
    <property type="entry name" value="Periplasmic serine endoprotease DegP-like"/>
    <property type="match status" value="1"/>
</dbReference>
<dbReference type="FunFam" id="2.40.10.120:FF:000007">
    <property type="entry name" value="Periplasmic serine endoprotease DegP-like"/>
    <property type="match status" value="1"/>
</dbReference>
<dbReference type="Gene3D" id="2.30.42.10">
    <property type="match status" value="2"/>
</dbReference>
<dbReference type="Gene3D" id="2.40.10.120">
    <property type="match status" value="1"/>
</dbReference>
<dbReference type="InterPro" id="IPR001478">
    <property type="entry name" value="PDZ"/>
</dbReference>
<dbReference type="InterPro" id="IPR036034">
    <property type="entry name" value="PDZ_sf"/>
</dbReference>
<dbReference type="InterPro" id="IPR011782">
    <property type="entry name" value="Pept_S1C_Do"/>
</dbReference>
<dbReference type="InterPro" id="IPR009003">
    <property type="entry name" value="Peptidase_S1_PA"/>
</dbReference>
<dbReference type="InterPro" id="IPR001940">
    <property type="entry name" value="Peptidase_S1C"/>
</dbReference>
<dbReference type="NCBIfam" id="TIGR02037">
    <property type="entry name" value="degP_htrA_DO"/>
    <property type="match status" value="1"/>
</dbReference>
<dbReference type="PANTHER" id="PTHR22939:SF130">
    <property type="entry name" value="PERIPLASMIC SERINE ENDOPROTEASE DEGP-LIKE-RELATED"/>
    <property type="match status" value="1"/>
</dbReference>
<dbReference type="PANTHER" id="PTHR22939">
    <property type="entry name" value="SERINE PROTEASE FAMILY S1C HTRA-RELATED"/>
    <property type="match status" value="1"/>
</dbReference>
<dbReference type="Pfam" id="PF13180">
    <property type="entry name" value="PDZ_2"/>
    <property type="match status" value="2"/>
</dbReference>
<dbReference type="Pfam" id="PF13365">
    <property type="entry name" value="Trypsin_2"/>
    <property type="match status" value="1"/>
</dbReference>
<dbReference type="PRINTS" id="PR00834">
    <property type="entry name" value="PROTEASES2C"/>
</dbReference>
<dbReference type="SMART" id="SM00228">
    <property type="entry name" value="PDZ"/>
    <property type="match status" value="2"/>
</dbReference>
<dbReference type="SUPFAM" id="SSF50156">
    <property type="entry name" value="PDZ domain-like"/>
    <property type="match status" value="2"/>
</dbReference>
<dbReference type="SUPFAM" id="SSF50494">
    <property type="entry name" value="Trypsin-like serine proteases"/>
    <property type="match status" value="1"/>
</dbReference>
<dbReference type="PROSITE" id="PS50106">
    <property type="entry name" value="PDZ"/>
    <property type="match status" value="2"/>
</dbReference>
<reference key="1">
    <citation type="submission" date="2007-04" db="EMBL/GenBank/DDBJ databases">
        <title>Complete sequence of Pseudomonas mendocina ymp.</title>
        <authorList>
            <consortium name="US DOE Joint Genome Institute"/>
            <person name="Copeland A."/>
            <person name="Lucas S."/>
            <person name="Lapidus A."/>
            <person name="Barry K."/>
            <person name="Glavina del Rio T."/>
            <person name="Dalin E."/>
            <person name="Tice H."/>
            <person name="Pitluck S."/>
            <person name="Kiss H."/>
            <person name="Brettin T."/>
            <person name="Detter J.C."/>
            <person name="Bruce D."/>
            <person name="Han C."/>
            <person name="Schmutz J."/>
            <person name="Larimer F."/>
            <person name="Land M."/>
            <person name="Hauser L."/>
            <person name="Kyrpides N."/>
            <person name="Mikhailova N."/>
            <person name="Hersman L."/>
            <person name="Dubois J."/>
            <person name="Maurice P."/>
            <person name="Richardson P."/>
        </authorList>
    </citation>
    <scope>NUCLEOTIDE SEQUENCE [LARGE SCALE GENOMIC DNA]</scope>
    <source>
        <strain>ymp</strain>
    </source>
</reference>